<comment type="function">
    <text evidence="5 6 7 8">Catalyzes the hydrolysis of phosphatidylinositol-4,5-bisphosphate (PtdIns-4,5-P2) to phosphatidylinositol-4-phosphate (PtdIns-4-P) (PubMed:16365287). Does not hydrolyze phosphatidylinositol 3,4,5-trisphosphate, phosphatidylinositol 3,4-bisphosphate, inositol 3,5-bisphosphate, inositol 3,4-bisphosphate, phosphatidylinositol 5-monophosphate, phosphatidylinositol 4-monophosphate and phosphatidylinositol 3-monophosphate (PubMed:16365287). Regulates lysosomal positioning by recruiting JIP4 to lysosomal membranes, thus inducing retrograde transport of lysosomes along microtubules (PubMed:29146937). Contributes to assembly of the V-ATPase complex in lipid rafts of the lysosomal membrane and to subsequent amino acid-dependent activation of mTORC1 (PubMed:29644770). May play a role in the regulation of cellular cholesterol metabolism (PubMed:25035345).</text>
</comment>
<comment type="catalytic activity">
    <reaction evidence="5">
        <text>a 1,2-diacyl-sn-glycero-3-phospho-(1D-myo-inositol-4,5-bisphosphate) + H2O = a 1,2-diacyl-sn-glycero-3-phospho-(1D-myo-inositol-5-phosphate) + phosphate</text>
        <dbReference type="Rhea" id="RHEA:25674"/>
        <dbReference type="ChEBI" id="CHEBI:15377"/>
        <dbReference type="ChEBI" id="CHEBI:43474"/>
        <dbReference type="ChEBI" id="CHEBI:57795"/>
        <dbReference type="ChEBI" id="CHEBI:58456"/>
        <dbReference type="EC" id="3.1.3.78"/>
    </reaction>
</comment>
<comment type="subunit">
    <text evidence="2 8">Interacts (via transmembrane domain) with ATP6V0D1 (PubMed:29644770). Interacts with LAMTOR1 (PubMed:29644770). Interacts with RRAGA and RRAGC (By similarity).</text>
</comment>
<comment type="interaction">
    <interactant intactId="EBI-6164623">
        <id>Q86T03</id>
    </interactant>
    <interactant intactId="EBI-12135243">
        <id>O95208-2</id>
        <label>EPN2</label>
    </interactant>
    <organismsDiffer>false</organismsDiffer>
    <experiments>3</experiments>
</comment>
<comment type="interaction">
    <interactant intactId="EBI-6164623">
        <id>Q86T03</id>
    </interactant>
    <interactant intactId="EBI-399080">
        <id>Q92993</id>
        <label>KAT5</label>
    </interactant>
    <organismsDiffer>false</organismsDiffer>
    <experiments>3</experiments>
</comment>
<comment type="interaction">
    <interactant intactId="EBI-6164623">
        <id>Q86T03</id>
    </interactant>
    <interactant intactId="EBI-11742507">
        <id>Q8TAP4-4</id>
        <label>LMO3</label>
    </interactant>
    <organismsDiffer>false</organismsDiffer>
    <experiments>3</experiments>
</comment>
<comment type="interaction">
    <interactant intactId="EBI-6164623">
        <id>Q86T03</id>
    </interactant>
    <interactant intactId="EBI-373552">
        <id>Q96CS7</id>
        <label>PLEKHB2</label>
    </interactant>
    <organismsDiffer>false</organismsDiffer>
    <experiments>3</experiments>
</comment>
<comment type="interaction">
    <interactant intactId="EBI-6164623">
        <id>Q86T03</id>
    </interactant>
    <interactant intactId="EBI-12072024">
        <id>Q5EBL4-3</id>
        <label>RILPL1</label>
    </interactant>
    <organismsDiffer>false</organismsDiffer>
    <experiments>5</experiments>
</comment>
<comment type="interaction">
    <interactant intactId="EBI-6164623">
        <id>Q86T03</id>
    </interactant>
    <interactant intactId="EBI-9090795">
        <id>Q15047-2</id>
        <label>SETDB1</label>
    </interactant>
    <organismsDiffer>false</organismsDiffer>
    <experiments>3</experiments>
</comment>
<comment type="interaction">
    <interactant intactId="EBI-6164623">
        <id>Q86T03</id>
    </interactant>
    <interactant intactId="EBI-18159983">
        <id>Q3KNW5</id>
        <label>SLC10A6</label>
    </interactant>
    <organismsDiffer>false</organismsDiffer>
    <experiments>3</experiments>
</comment>
<comment type="interaction">
    <interactant intactId="EBI-6164623">
        <id>Q86T03</id>
    </interactant>
    <interactant intactId="EBI-359832">
        <id>P61981</id>
        <label>YWHAG</label>
    </interactant>
    <organismsDiffer>false</organismsDiffer>
    <experiments>3</experiments>
</comment>
<comment type="subcellular location">
    <subcellularLocation>
        <location evidence="5">Late endosome membrane</location>
        <topology evidence="3">Multi-pass membrane protein</topology>
    </subcellularLocation>
    <subcellularLocation>
        <location evidence="5">Lysosome membrane</location>
        <topology evidence="3">Multi-pass membrane protein</topology>
    </subcellularLocation>
    <subcellularLocation>
        <location evidence="2">Cytoplasmic vesicle</location>
        <location evidence="2">Phagosome membrane</location>
        <topology evidence="3">Multi-pass membrane protein</topology>
    </subcellularLocation>
    <subcellularLocation>
        <location evidence="2">Cell membrane</location>
        <topology evidence="3">Multi-pass membrane protein</topology>
    </subcellularLocation>
</comment>
<comment type="alternative products">
    <event type="alternative splicing"/>
    <isoform>
        <id>Q86T03-1</id>
        <name>1</name>
        <sequence type="displayed"/>
    </isoform>
    <isoform>
        <id>Q86T03-2</id>
        <name>2</name>
        <sequence type="described" ref="VSP_007815"/>
    </isoform>
    <isoform>
        <id>Q86T03-3</id>
        <name>3</name>
        <sequence type="described" ref="VSP_007816 VSP_007817"/>
    </isoform>
</comment>
<comment type="tissue specificity">
    <text evidence="5">Ubiquitous.</text>
</comment>
<comment type="induction">
    <text evidence="6 7">By sterol depletion.</text>
</comment>
<comment type="miscellaneous">
    <molecule>Isoform 3</molecule>
    <text evidence="11">May be due to intron retention.</text>
</comment>
<comment type="sequence caution" evidence="11">
    <conflict type="erroneous initiation">
        <sequence resource="EMBL-CDS" id="CAB70896"/>
    </conflict>
</comment>
<comment type="sequence caution" evidence="11">
    <conflict type="erroneous initiation">
        <sequence resource="EMBL-CDS" id="CAD62347"/>
    </conflict>
</comment>
<reference key="1">
    <citation type="submission" date="2003-01" db="EMBL/GenBank/DDBJ databases">
        <title>Full-length cDNA libraries and normalization.</title>
        <authorList>
            <person name="Li W.B."/>
            <person name="Gruber C."/>
            <person name="Jessee J."/>
            <person name="Polayes D."/>
        </authorList>
    </citation>
    <scope>NUCLEOTIDE SEQUENCE [LARGE SCALE MRNA] (ISOFORMS 1 AND 2)</scope>
    <source>
        <tissue>Neuroblastoma</tissue>
        <tissue>T-cell</tissue>
    </source>
</reference>
<reference key="2">
    <citation type="journal article" date="2004" name="Nat. Genet.">
        <title>Complete sequencing and characterization of 21,243 full-length human cDNAs.</title>
        <authorList>
            <person name="Ota T."/>
            <person name="Suzuki Y."/>
            <person name="Nishikawa T."/>
            <person name="Otsuki T."/>
            <person name="Sugiyama T."/>
            <person name="Irie R."/>
            <person name="Wakamatsu A."/>
            <person name="Hayashi K."/>
            <person name="Sato H."/>
            <person name="Nagai K."/>
            <person name="Kimura K."/>
            <person name="Makita H."/>
            <person name="Sekine M."/>
            <person name="Obayashi M."/>
            <person name="Nishi T."/>
            <person name="Shibahara T."/>
            <person name="Tanaka T."/>
            <person name="Ishii S."/>
            <person name="Yamamoto J."/>
            <person name="Saito K."/>
            <person name="Kawai Y."/>
            <person name="Isono Y."/>
            <person name="Nakamura Y."/>
            <person name="Nagahari K."/>
            <person name="Murakami K."/>
            <person name="Yasuda T."/>
            <person name="Iwayanagi T."/>
            <person name="Wagatsuma M."/>
            <person name="Shiratori A."/>
            <person name="Sudo H."/>
            <person name="Hosoiri T."/>
            <person name="Kaku Y."/>
            <person name="Kodaira H."/>
            <person name="Kondo H."/>
            <person name="Sugawara M."/>
            <person name="Takahashi M."/>
            <person name="Kanda K."/>
            <person name="Yokoi T."/>
            <person name="Furuya T."/>
            <person name="Kikkawa E."/>
            <person name="Omura Y."/>
            <person name="Abe K."/>
            <person name="Kamihara K."/>
            <person name="Katsuta N."/>
            <person name="Sato K."/>
            <person name="Tanikawa M."/>
            <person name="Yamazaki M."/>
            <person name="Ninomiya K."/>
            <person name="Ishibashi T."/>
            <person name="Yamashita H."/>
            <person name="Murakawa K."/>
            <person name="Fujimori K."/>
            <person name="Tanai H."/>
            <person name="Kimata M."/>
            <person name="Watanabe M."/>
            <person name="Hiraoka S."/>
            <person name="Chiba Y."/>
            <person name="Ishida S."/>
            <person name="Ono Y."/>
            <person name="Takiguchi S."/>
            <person name="Watanabe S."/>
            <person name="Yosida M."/>
            <person name="Hotuta T."/>
            <person name="Kusano J."/>
            <person name="Kanehori K."/>
            <person name="Takahashi-Fujii A."/>
            <person name="Hara H."/>
            <person name="Tanase T.-O."/>
            <person name="Nomura Y."/>
            <person name="Togiya S."/>
            <person name="Komai F."/>
            <person name="Hara R."/>
            <person name="Takeuchi K."/>
            <person name="Arita M."/>
            <person name="Imose N."/>
            <person name="Musashino K."/>
            <person name="Yuuki H."/>
            <person name="Oshima A."/>
            <person name="Sasaki N."/>
            <person name="Aotsuka S."/>
            <person name="Yoshikawa Y."/>
            <person name="Matsunawa H."/>
            <person name="Ichihara T."/>
            <person name="Shiohata N."/>
            <person name="Sano S."/>
            <person name="Moriya S."/>
            <person name="Momiyama H."/>
            <person name="Satoh N."/>
            <person name="Takami S."/>
            <person name="Terashima Y."/>
            <person name="Suzuki O."/>
            <person name="Nakagawa S."/>
            <person name="Senoh A."/>
            <person name="Mizoguchi H."/>
            <person name="Goto Y."/>
            <person name="Shimizu F."/>
            <person name="Wakebe H."/>
            <person name="Hishigaki H."/>
            <person name="Watanabe T."/>
            <person name="Sugiyama A."/>
            <person name="Takemoto M."/>
            <person name="Kawakami B."/>
            <person name="Yamazaki M."/>
            <person name="Watanabe K."/>
            <person name="Kumagai A."/>
            <person name="Itakura S."/>
            <person name="Fukuzumi Y."/>
            <person name="Fujimori Y."/>
            <person name="Komiyama M."/>
            <person name="Tashiro H."/>
            <person name="Tanigami A."/>
            <person name="Fujiwara T."/>
            <person name="Ono T."/>
            <person name="Yamada K."/>
            <person name="Fujii Y."/>
            <person name="Ozaki K."/>
            <person name="Hirao M."/>
            <person name="Ohmori Y."/>
            <person name="Kawabata A."/>
            <person name="Hikiji T."/>
            <person name="Kobatake N."/>
            <person name="Inagaki H."/>
            <person name="Ikema Y."/>
            <person name="Okamoto S."/>
            <person name="Okitani R."/>
            <person name="Kawakami T."/>
            <person name="Noguchi S."/>
            <person name="Itoh T."/>
            <person name="Shigeta K."/>
            <person name="Senba T."/>
            <person name="Matsumura K."/>
            <person name="Nakajima Y."/>
            <person name="Mizuno T."/>
            <person name="Morinaga M."/>
            <person name="Sasaki M."/>
            <person name="Togashi T."/>
            <person name="Oyama M."/>
            <person name="Hata H."/>
            <person name="Watanabe M."/>
            <person name="Komatsu T."/>
            <person name="Mizushima-Sugano J."/>
            <person name="Satoh T."/>
            <person name="Shirai Y."/>
            <person name="Takahashi Y."/>
            <person name="Nakagawa K."/>
            <person name="Okumura K."/>
            <person name="Nagase T."/>
            <person name="Nomura N."/>
            <person name="Kikuchi H."/>
            <person name="Masuho Y."/>
            <person name="Yamashita R."/>
            <person name="Nakai K."/>
            <person name="Yada T."/>
            <person name="Nakamura Y."/>
            <person name="Ohara O."/>
            <person name="Isogai T."/>
            <person name="Sugano S."/>
        </authorList>
    </citation>
    <scope>NUCLEOTIDE SEQUENCE [LARGE SCALE MRNA] (ISOFORM 1)</scope>
    <source>
        <tissue>Substantia nigra</tissue>
    </source>
</reference>
<reference key="3">
    <citation type="journal article" date="2007" name="BMC Genomics">
        <title>The full-ORF clone resource of the German cDNA consortium.</title>
        <authorList>
            <person name="Bechtel S."/>
            <person name="Rosenfelder H."/>
            <person name="Duda A."/>
            <person name="Schmidt C.P."/>
            <person name="Ernst U."/>
            <person name="Wellenreuther R."/>
            <person name="Mehrle A."/>
            <person name="Schuster C."/>
            <person name="Bahr A."/>
            <person name="Bloecker H."/>
            <person name="Heubner D."/>
            <person name="Hoerlein A."/>
            <person name="Michel G."/>
            <person name="Wedler H."/>
            <person name="Koehrer K."/>
            <person name="Ottenwaelder B."/>
            <person name="Poustka A."/>
            <person name="Wiemann S."/>
            <person name="Schupp I."/>
        </authorList>
    </citation>
    <scope>NUCLEOTIDE SEQUENCE [LARGE SCALE MRNA] (ISOFORM 3)</scope>
    <source>
        <tissue>Testis</tissue>
    </source>
</reference>
<reference key="4">
    <citation type="submission" date="2005-09" db="EMBL/GenBank/DDBJ databases">
        <authorList>
            <person name="Mural R.J."/>
            <person name="Istrail S."/>
            <person name="Sutton G.G."/>
            <person name="Florea L."/>
            <person name="Halpern A.L."/>
            <person name="Mobarry C.M."/>
            <person name="Lippert R."/>
            <person name="Walenz B."/>
            <person name="Shatkay H."/>
            <person name="Dew I."/>
            <person name="Miller J.R."/>
            <person name="Flanigan M.J."/>
            <person name="Edwards N.J."/>
            <person name="Bolanos R."/>
            <person name="Fasulo D."/>
            <person name="Halldorsson B.V."/>
            <person name="Hannenhalli S."/>
            <person name="Turner R."/>
            <person name="Yooseph S."/>
            <person name="Lu F."/>
            <person name="Nusskern D.R."/>
            <person name="Shue B.C."/>
            <person name="Zheng X.H."/>
            <person name="Zhong F."/>
            <person name="Delcher A.L."/>
            <person name="Huson D.H."/>
            <person name="Kravitz S.A."/>
            <person name="Mouchard L."/>
            <person name="Reinert K."/>
            <person name="Remington K.A."/>
            <person name="Clark A.G."/>
            <person name="Waterman M.S."/>
            <person name="Eichler E.E."/>
            <person name="Adams M.D."/>
            <person name="Hunkapiller M.W."/>
            <person name="Myers E.W."/>
            <person name="Venter J.C."/>
        </authorList>
    </citation>
    <scope>NUCLEOTIDE SEQUENCE [LARGE SCALE GENOMIC DNA]</scope>
</reference>
<reference key="5">
    <citation type="journal article" date="2004" name="Genome Res.">
        <title>The status, quality, and expansion of the NIH full-length cDNA project: the Mammalian Gene Collection (MGC).</title>
        <authorList>
            <consortium name="The MGC Project Team"/>
        </authorList>
    </citation>
    <scope>NUCLEOTIDE SEQUENCE [LARGE SCALE MRNA] (ISOFORM 1)</scope>
    <source>
        <tissue>Brain</tissue>
        <tissue>Lung</tissue>
    </source>
</reference>
<reference key="6">
    <citation type="journal article" date="2005" name="Proc. Natl. Acad. Sci. U.S.A.">
        <title>The identification and characterization of two phosphatidylinositol-4,5-bisphosphate 4-phosphatases.</title>
        <authorList>
            <person name="Ungewickell A."/>
            <person name="Hugge C."/>
            <person name="Kisseleva M."/>
            <person name="Chang S.-C."/>
            <person name="Zou J."/>
            <person name="Feng Y."/>
            <person name="Galyov E.E."/>
            <person name="Wilson M."/>
            <person name="Majerus P.W."/>
        </authorList>
    </citation>
    <scope>FUNCTION</scope>
    <scope>SUBCELLULAR LOCATION</scope>
    <scope>TISSUE SPECIFICITY</scope>
    <scope>CATALYTIC ACTIVITY</scope>
</reference>
<reference key="7">
    <citation type="journal article" date="2008" name="Proc. Natl. Acad. Sci. U.S.A.">
        <title>A quantitative atlas of mitotic phosphorylation.</title>
        <authorList>
            <person name="Dephoure N."/>
            <person name="Zhou C."/>
            <person name="Villen J."/>
            <person name="Beausoleil S.A."/>
            <person name="Bakalarski C.E."/>
            <person name="Elledge S.J."/>
            <person name="Gygi S.P."/>
        </authorList>
    </citation>
    <scope>IDENTIFICATION BY MASS SPECTROMETRY [LARGE SCALE ANALYSIS]</scope>
    <source>
        <tissue>Cervix carcinoma</tissue>
    </source>
</reference>
<reference key="8">
    <citation type="journal article" date="2014" name="Arterioscler. Thromb. Vasc. Biol.">
        <title>Transmembrane protein 55B is a novel regulator of cellular cholesterol metabolism.</title>
        <authorList>
            <person name="Medina M.W."/>
            <person name="Bauzon F."/>
            <person name="Naidoo D."/>
            <person name="Theusch E."/>
            <person name="Stevens K."/>
            <person name="Schilde J."/>
            <person name="Schubert C."/>
            <person name="Mangravite L.M."/>
            <person name="Rudel L.L."/>
            <person name="Temel R.E."/>
            <person name="Runz H."/>
            <person name="Krauss R.M."/>
        </authorList>
    </citation>
    <scope>FUNCTION</scope>
    <scope>INDUCTION</scope>
</reference>
<reference key="9">
    <citation type="journal article" date="2017" name="Nat. Commun.">
        <title>TFEB regulates lysosomal positioning by modulating TMEM55B expression and JIP4 recruitment to lysosomes.</title>
        <authorList>
            <person name="Willett R."/>
            <person name="Martina J.A."/>
            <person name="Zewe J.P."/>
            <person name="Wills R."/>
            <person name="Hammond G.R.V."/>
            <person name="Puertollano R."/>
        </authorList>
    </citation>
    <scope>FUNCTION</scope>
    <scope>SUBCELLULAR LOCATION</scope>
    <scope>INTERACTION WITH JIP4</scope>
    <scope>INDUCTION</scope>
</reference>
<reference key="10">
    <citation type="journal article" date="2018" name="Genes Cells">
        <title>TMEM55B contributes to lysosomal homeostasis and amino acid-induced mTORC1 activation.</title>
        <authorList>
            <person name="Hashimoto Y."/>
            <person name="Shirane M."/>
            <person name="Nakayama K.I."/>
        </authorList>
    </citation>
    <scope>FUNCTION</scope>
    <scope>INTERACTION WITH ATP6V0D1 AND LAMTOR1</scope>
</reference>
<gene>
    <name evidence="12" type="primary">PIP4P1</name>
    <name evidence="12" type="synonym">C14orf9</name>
    <name evidence="12" type="synonym">TMEM55B</name>
</gene>
<organism>
    <name type="scientific">Homo sapiens</name>
    <name type="common">Human</name>
    <dbReference type="NCBI Taxonomy" id="9606"/>
    <lineage>
        <taxon>Eukaryota</taxon>
        <taxon>Metazoa</taxon>
        <taxon>Chordata</taxon>
        <taxon>Craniata</taxon>
        <taxon>Vertebrata</taxon>
        <taxon>Euteleostomi</taxon>
        <taxon>Mammalia</taxon>
        <taxon>Eutheria</taxon>
        <taxon>Euarchontoglires</taxon>
        <taxon>Primates</taxon>
        <taxon>Haplorrhini</taxon>
        <taxon>Catarrhini</taxon>
        <taxon>Hominidae</taxon>
        <taxon>Homo</taxon>
    </lineage>
</organism>
<keyword id="KW-0002">3D-structure</keyword>
<keyword id="KW-0025">Alternative splicing</keyword>
<keyword id="KW-1003">Cell membrane</keyword>
<keyword id="KW-0968">Cytoplasmic vesicle</keyword>
<keyword id="KW-0967">Endosome</keyword>
<keyword id="KW-0378">Hydrolase</keyword>
<keyword id="KW-0443">Lipid metabolism</keyword>
<keyword id="KW-0458">Lysosome</keyword>
<keyword id="KW-0472">Membrane</keyword>
<keyword id="KW-0597">Phosphoprotein</keyword>
<keyword id="KW-1267">Proteomics identification</keyword>
<keyword id="KW-1185">Reference proteome</keyword>
<keyword id="KW-0812">Transmembrane</keyword>
<keyword id="KW-1133">Transmembrane helix</keyword>
<evidence type="ECO:0000250" key="1"/>
<evidence type="ECO:0000250" key="2">
    <source>
        <dbReference type="UniProtKB" id="Q3TWL2"/>
    </source>
</evidence>
<evidence type="ECO:0000255" key="3"/>
<evidence type="ECO:0000256" key="4">
    <source>
        <dbReference type="SAM" id="MobiDB-lite"/>
    </source>
</evidence>
<evidence type="ECO:0000269" key="5">
    <source>
    </source>
</evidence>
<evidence type="ECO:0000269" key="6">
    <source>
    </source>
</evidence>
<evidence type="ECO:0000269" key="7">
    <source>
    </source>
</evidence>
<evidence type="ECO:0000269" key="8">
    <source>
    </source>
</evidence>
<evidence type="ECO:0000303" key="9">
    <source>
    </source>
</evidence>
<evidence type="ECO:0000303" key="10">
    <source ref="1"/>
</evidence>
<evidence type="ECO:0000305" key="11"/>
<evidence type="ECO:0000312" key="12">
    <source>
        <dbReference type="HGNC" id="HGNC:19299"/>
    </source>
</evidence>
<accession>Q86T03</accession>
<accession>B2RA35</accession>
<accession>Q86U09</accession>
<accession>Q8WUC0</accession>
<accession>Q9BU67</accession>
<accession>Q9NSU8</accession>
<dbReference type="EC" id="3.1.3.78" evidence="5"/>
<dbReference type="EMBL" id="BX161490">
    <property type="protein sequence ID" value="CAD61939.1"/>
    <property type="molecule type" value="mRNA"/>
</dbReference>
<dbReference type="EMBL" id="BX248025">
    <property type="protein sequence ID" value="CAD62347.1"/>
    <property type="status" value="ALT_INIT"/>
    <property type="molecule type" value="mRNA"/>
</dbReference>
<dbReference type="EMBL" id="AK314021">
    <property type="protein sequence ID" value="BAG36732.1"/>
    <property type="molecule type" value="mRNA"/>
</dbReference>
<dbReference type="EMBL" id="AL137727">
    <property type="protein sequence ID" value="CAB70896.1"/>
    <property type="status" value="ALT_INIT"/>
    <property type="molecule type" value="mRNA"/>
</dbReference>
<dbReference type="EMBL" id="CH471078">
    <property type="protein sequence ID" value="EAW66461.1"/>
    <property type="molecule type" value="Genomic_DNA"/>
</dbReference>
<dbReference type="EMBL" id="BC002867">
    <property type="protein sequence ID" value="AAH02867.2"/>
    <property type="molecule type" value="mRNA"/>
</dbReference>
<dbReference type="EMBL" id="BC020947">
    <property type="protein sequence ID" value="AAH20947.1"/>
    <property type="molecule type" value="mRNA"/>
</dbReference>
<dbReference type="CCDS" id="CCDS41911.1">
    <molecule id="Q86T03-2"/>
</dbReference>
<dbReference type="CCDS" id="CCDS9551.1">
    <molecule id="Q86T03-1"/>
</dbReference>
<dbReference type="PIR" id="T46382">
    <property type="entry name" value="T46382"/>
</dbReference>
<dbReference type="RefSeq" id="NP_001094284.1">
    <molecule id="Q86T03-2"/>
    <property type="nucleotide sequence ID" value="NM_001100814.3"/>
</dbReference>
<dbReference type="RefSeq" id="NP_653169.2">
    <molecule id="Q86T03-1"/>
    <property type="nucleotide sequence ID" value="NM_144568.4"/>
</dbReference>
<dbReference type="PDB" id="8OQH">
    <property type="method" value="X-ray"/>
    <property type="resolution" value="1.76 A"/>
    <property type="chains" value="A/B=73-159"/>
</dbReference>
<dbReference type="PDBsum" id="8OQH"/>
<dbReference type="SMR" id="Q86T03"/>
<dbReference type="BioGRID" id="124764">
    <property type="interactions" value="87"/>
</dbReference>
<dbReference type="FunCoup" id="Q86T03">
    <property type="interactions" value="3318"/>
</dbReference>
<dbReference type="IntAct" id="Q86T03">
    <property type="interactions" value="74"/>
</dbReference>
<dbReference type="MINT" id="Q86T03"/>
<dbReference type="STRING" id="9606.ENSP00000381102"/>
<dbReference type="SwissLipids" id="SLP:000000850"/>
<dbReference type="DEPOD" id="PIP4P1"/>
<dbReference type="iPTMnet" id="Q86T03"/>
<dbReference type="PhosphoSitePlus" id="Q86T03"/>
<dbReference type="SwissPalm" id="Q86T03"/>
<dbReference type="BioMuta" id="PIP4P1"/>
<dbReference type="DMDM" id="33112243"/>
<dbReference type="jPOST" id="Q86T03"/>
<dbReference type="MassIVE" id="Q86T03"/>
<dbReference type="PaxDb" id="9606-ENSP00000381102"/>
<dbReference type="PeptideAtlas" id="Q86T03"/>
<dbReference type="ProteomicsDB" id="69653">
    <molecule id="Q86T03-1"/>
</dbReference>
<dbReference type="ProteomicsDB" id="69654">
    <molecule id="Q86T03-2"/>
</dbReference>
<dbReference type="ProteomicsDB" id="69655">
    <molecule id="Q86T03-3"/>
</dbReference>
<dbReference type="Pumba" id="Q86T03"/>
<dbReference type="Antibodypedia" id="64010">
    <property type="antibodies" value="54 antibodies from 16 providers"/>
</dbReference>
<dbReference type="DNASU" id="90809"/>
<dbReference type="Ensembl" id="ENST00000250489.9">
    <molecule id="Q86T03-1"/>
    <property type="protein sequence ID" value="ENSP00000250489.4"/>
    <property type="gene ID" value="ENSG00000165782.11"/>
</dbReference>
<dbReference type="Ensembl" id="ENST00000398020.6">
    <molecule id="Q86T03-2"/>
    <property type="protein sequence ID" value="ENSP00000381102.4"/>
    <property type="gene ID" value="ENSG00000165782.11"/>
</dbReference>
<dbReference type="Ensembl" id="ENST00000708815.1">
    <molecule id="Q86T03-1"/>
    <property type="protein sequence ID" value="ENSP00000517357.1"/>
    <property type="gene ID" value="ENSG00000291802.1"/>
</dbReference>
<dbReference type="Ensembl" id="ENST00000708818.1">
    <molecule id="Q86T03-2"/>
    <property type="protein sequence ID" value="ENSP00000517359.1"/>
    <property type="gene ID" value="ENSG00000291802.1"/>
</dbReference>
<dbReference type="GeneID" id="90809"/>
<dbReference type="KEGG" id="hsa:90809"/>
<dbReference type="MANE-Select" id="ENST00000250489.9">
    <property type="protein sequence ID" value="ENSP00000250489.4"/>
    <property type="RefSeq nucleotide sequence ID" value="NM_144568.4"/>
    <property type="RefSeq protein sequence ID" value="NP_653169.2"/>
</dbReference>
<dbReference type="UCSC" id="uc001vxk.4">
    <molecule id="Q86T03-1"/>
    <property type="organism name" value="human"/>
</dbReference>
<dbReference type="AGR" id="HGNC:19299"/>
<dbReference type="CTD" id="90809"/>
<dbReference type="GeneCards" id="PIP4P1"/>
<dbReference type="HGNC" id="HGNC:19299">
    <property type="gene designation" value="PIP4P1"/>
</dbReference>
<dbReference type="HPA" id="ENSG00000165782">
    <property type="expression patterns" value="Low tissue specificity"/>
</dbReference>
<dbReference type="MIM" id="609865">
    <property type="type" value="gene"/>
</dbReference>
<dbReference type="neXtProt" id="NX_Q86T03"/>
<dbReference type="OpenTargets" id="ENSG00000165782"/>
<dbReference type="PharmGKB" id="PA134919069"/>
<dbReference type="VEuPathDB" id="HostDB:ENSG00000165782"/>
<dbReference type="eggNOG" id="KOG4684">
    <property type="taxonomic scope" value="Eukaryota"/>
</dbReference>
<dbReference type="GeneTree" id="ENSGT00390000003680"/>
<dbReference type="HOGENOM" id="CLU_087485_0_0_1"/>
<dbReference type="InParanoid" id="Q86T03"/>
<dbReference type="OMA" id="CKNSFLW"/>
<dbReference type="OrthoDB" id="9939933at2759"/>
<dbReference type="PAN-GO" id="Q86T03">
    <property type="GO annotations" value="6 GO annotations based on evolutionary models"/>
</dbReference>
<dbReference type="PhylomeDB" id="Q86T03"/>
<dbReference type="TreeFam" id="TF316367"/>
<dbReference type="BioCyc" id="MetaCyc:HS15363-MONOMER"/>
<dbReference type="BRENDA" id="3.1.3.78">
    <property type="organism ID" value="2681"/>
</dbReference>
<dbReference type="PathwayCommons" id="Q86T03"/>
<dbReference type="Reactome" id="R-HSA-6811555">
    <property type="pathway name" value="PI5P Regulates TP53 Acetylation"/>
</dbReference>
<dbReference type="Reactome" id="R-HSA-8847453">
    <property type="pathway name" value="Synthesis of PIPs in the nucleus"/>
</dbReference>
<dbReference type="SignaLink" id="Q86T03"/>
<dbReference type="SIGNOR" id="Q86T03"/>
<dbReference type="BioGRID-ORCS" id="90809">
    <property type="hits" value="14 hits in 1168 CRISPR screens"/>
</dbReference>
<dbReference type="ChiTaRS" id="TMEM55B">
    <property type="organism name" value="human"/>
</dbReference>
<dbReference type="GenomeRNAi" id="90809"/>
<dbReference type="Pharos" id="Q86T03">
    <property type="development level" value="Tbio"/>
</dbReference>
<dbReference type="PRO" id="PR:Q86T03"/>
<dbReference type="Proteomes" id="UP000005640">
    <property type="component" value="Chromosome 14"/>
</dbReference>
<dbReference type="RNAct" id="Q86T03">
    <property type="molecule type" value="protein"/>
</dbReference>
<dbReference type="Bgee" id="ENSG00000165782">
    <property type="expression patterns" value="Expressed in ileal mucosa and 167 other cell types or tissues"/>
</dbReference>
<dbReference type="ExpressionAtlas" id="Q86T03">
    <property type="expression patterns" value="baseline and differential"/>
</dbReference>
<dbReference type="GO" id="GO:0031902">
    <property type="term" value="C:late endosome membrane"/>
    <property type="evidence" value="ECO:0000314"/>
    <property type="project" value="FlyBase"/>
</dbReference>
<dbReference type="GO" id="GO:0005765">
    <property type="term" value="C:lysosomal membrane"/>
    <property type="evidence" value="ECO:0000314"/>
    <property type="project" value="UniProtKB"/>
</dbReference>
<dbReference type="GO" id="GO:0005654">
    <property type="term" value="C:nucleoplasm"/>
    <property type="evidence" value="ECO:0000304"/>
    <property type="project" value="Reactome"/>
</dbReference>
<dbReference type="GO" id="GO:0030670">
    <property type="term" value="C:phagocytic vesicle membrane"/>
    <property type="evidence" value="ECO:0000250"/>
    <property type="project" value="UniProtKB"/>
</dbReference>
<dbReference type="GO" id="GO:0005886">
    <property type="term" value="C:plasma membrane"/>
    <property type="evidence" value="ECO:0000250"/>
    <property type="project" value="UniProtKB"/>
</dbReference>
<dbReference type="GO" id="GO:0034597">
    <property type="term" value="F:phosphatidylinositol-4,5-bisphosphate 4-phosphatase activity"/>
    <property type="evidence" value="ECO:0000314"/>
    <property type="project" value="FlyBase"/>
</dbReference>
<dbReference type="GO" id="GO:0008203">
    <property type="term" value="P:cholesterol metabolic process"/>
    <property type="evidence" value="ECO:0000315"/>
    <property type="project" value="UniProtKB"/>
</dbReference>
<dbReference type="GO" id="GO:0032418">
    <property type="term" value="P:lysosome localization"/>
    <property type="evidence" value="ECO:0000315"/>
    <property type="project" value="UniProtKB"/>
</dbReference>
<dbReference type="GO" id="GO:0046856">
    <property type="term" value="P:phosphatidylinositol dephosphorylation"/>
    <property type="evidence" value="ECO:0000314"/>
    <property type="project" value="FlyBase"/>
</dbReference>
<dbReference type="GO" id="GO:0006644">
    <property type="term" value="P:phospholipid metabolic process"/>
    <property type="evidence" value="ECO:0000304"/>
    <property type="project" value="Reactome"/>
</dbReference>
<dbReference type="GO" id="GO:1904263">
    <property type="term" value="P:positive regulation of TORC1 signaling"/>
    <property type="evidence" value="ECO:0000315"/>
    <property type="project" value="UniProtKB"/>
</dbReference>
<dbReference type="GO" id="GO:0070070">
    <property type="term" value="P:proton-transporting V-type ATPase complex assembly"/>
    <property type="evidence" value="ECO:0000250"/>
    <property type="project" value="UniProtKB"/>
</dbReference>
<dbReference type="GO" id="GO:1901796">
    <property type="term" value="P:regulation of signal transduction by p53 class mediator"/>
    <property type="evidence" value="ECO:0000304"/>
    <property type="project" value="Reactome"/>
</dbReference>
<dbReference type="GO" id="GO:0006991">
    <property type="term" value="P:response to sterol depletion"/>
    <property type="evidence" value="ECO:0000314"/>
    <property type="project" value="UniProtKB"/>
</dbReference>
<dbReference type="InterPro" id="IPR019178">
    <property type="entry name" value="PtdIns-P2-Ptase"/>
</dbReference>
<dbReference type="PANTHER" id="PTHR21014">
    <property type="entry name" value="PHOSPHATIDYLINOSITOL-4,5-BISPHOSPHATE 4-PHOSPHATASE"/>
    <property type="match status" value="1"/>
</dbReference>
<dbReference type="PANTHER" id="PTHR21014:SF2">
    <property type="entry name" value="TYPE 1 PHOSPHATIDYLINOSITOL 4,5-BISPHOSPHATE 4-PHOSPHATASE"/>
    <property type="match status" value="1"/>
</dbReference>
<dbReference type="Pfam" id="PF09788">
    <property type="entry name" value="Tmemb_55A"/>
    <property type="match status" value="1"/>
</dbReference>
<proteinExistence type="evidence at protein level"/>
<protein>
    <recommendedName>
        <fullName>Type 1 phosphatidylinositol 4,5-bisphosphate 4-phosphatase</fullName>
        <shortName>Type 1 PtdIns-4,5-P2 4-Ptase</shortName>
        <ecNumber evidence="5">3.1.3.78</ecNumber>
    </recommendedName>
    <alternativeName>
        <fullName>PtdIns-4,5-P2 4-Ptase I</fullName>
    </alternativeName>
    <alternativeName>
        <fullName>Transmembrane protein 55B</fullName>
    </alternativeName>
</protein>
<name>PP4P1_HUMAN</name>
<sequence length="277" mass="29470">MAADGERSPLLSEPIDGGAGGNGLVGPGGSGAGPGGGLTPSAPPYGAAFPPFPEGHPAVLPGEDPPPYSPLTSPDSGSAPMITCRVCQSLINVEGKMHQHVVKCGVCNEATPIKNAPPGKKYVRCPCNCLLICKVTSQRIACPRPYCKRIINLGPVHPGPLSPEPQPMGVRVICGHCKNTFLWTEFTDRTLARCPHCRKVSSIGRRYPRKRCICCFLLGLLLAVTATGLAFGTWKHARRYGGIYAAWAFVILLAVLCLGRALYWACMKVSHPVQNFS</sequence>
<feature type="chain" id="PRO_0000072579" description="Type 1 phosphatidylinositol 4,5-bisphosphate 4-phosphatase">
    <location>
        <begin position="1"/>
        <end position="277"/>
    </location>
</feature>
<feature type="transmembrane region" description="Helical" evidence="3">
    <location>
        <begin position="212"/>
        <end position="232"/>
    </location>
</feature>
<feature type="transmembrane region" description="Helical" evidence="3">
    <location>
        <begin position="242"/>
        <end position="262"/>
    </location>
</feature>
<feature type="region of interest" description="Disordered" evidence="4">
    <location>
        <begin position="1"/>
        <end position="74"/>
    </location>
</feature>
<feature type="short sequence motif" description="CX5R motif">
    <location>
        <begin position="133"/>
        <end position="139"/>
    </location>
</feature>
<feature type="compositionally biased region" description="Gly residues" evidence="4">
    <location>
        <begin position="17"/>
        <end position="38"/>
    </location>
</feature>
<feature type="active site" evidence="1">
    <location>
        <position position="133"/>
    </location>
</feature>
<feature type="modified residue" description="Phosphoserine" evidence="2">
    <location>
        <position position="162"/>
    </location>
</feature>
<feature type="splice variant" id="VSP_007815" description="In isoform 2." evidence="10">
    <original>A</original>
    <variation>AGKHAPPQ</variation>
    <location>
        <position position="47"/>
    </location>
</feature>
<feature type="splice variant" id="VSP_007816" description="In isoform 3." evidence="9">
    <original>AFPPFPEGHPAVLPGEDPPPYSPLTSPDSGSAPMITCRVCQSLINVEGKMHQHVVKCGVCNEATPIKNAPPGKKYVRCPCNCLLICKVTSQRIACPRPYCKRIINLGPVHPGPLSPEPQPMGVRVICGHCKNTFLWTEFTDRTLARCPHCRKVSSIGRRYPRKRCICCFLLGLLLAV</original>
    <variation>GKHAPPQGKPGRVRGAPRGTLKAGEGAGPRAEAGPSRQVRDCCTCDWARLPSLRNRDHSLGTEGGSEQPDRSANYEKPSELGQRVEDQKDFPTTVEHQWGCK</variation>
    <location>
        <begin position="48"/>
        <end position="224"/>
    </location>
</feature>
<feature type="splice variant" id="VSP_007817" description="In isoform 3." evidence="9">
    <location>
        <begin position="225"/>
        <end position="277"/>
    </location>
</feature>
<feature type="sequence conflict" description="In Ref. 5; AAH20947." evidence="11" ref="5">
    <original>P</original>
    <variation>T</variation>
    <location>
        <position position="208"/>
    </location>
</feature>